<proteinExistence type="inferred from homology"/>
<dbReference type="EC" id="2.7.4.25" evidence="1"/>
<dbReference type="EMBL" id="CP000993">
    <property type="protein sequence ID" value="ACH94388.1"/>
    <property type="molecule type" value="Genomic_DNA"/>
</dbReference>
<dbReference type="RefSeq" id="WP_012537900.1">
    <property type="nucleotide sequence ID" value="NZ_CP169983.1"/>
</dbReference>
<dbReference type="SMR" id="B5RQV4"/>
<dbReference type="KEGG" id="bre:BRE_131"/>
<dbReference type="HOGENOM" id="CLU_079959_0_2_12"/>
<dbReference type="Proteomes" id="UP000000612">
    <property type="component" value="Chromosome"/>
</dbReference>
<dbReference type="GO" id="GO:0005737">
    <property type="term" value="C:cytoplasm"/>
    <property type="evidence" value="ECO:0007669"/>
    <property type="project" value="UniProtKB-SubCell"/>
</dbReference>
<dbReference type="GO" id="GO:0005524">
    <property type="term" value="F:ATP binding"/>
    <property type="evidence" value="ECO:0007669"/>
    <property type="project" value="UniProtKB-UniRule"/>
</dbReference>
<dbReference type="GO" id="GO:0036430">
    <property type="term" value="F:CMP kinase activity"/>
    <property type="evidence" value="ECO:0007669"/>
    <property type="project" value="RHEA"/>
</dbReference>
<dbReference type="GO" id="GO:0036431">
    <property type="term" value="F:dCMP kinase activity"/>
    <property type="evidence" value="ECO:0007669"/>
    <property type="project" value="RHEA"/>
</dbReference>
<dbReference type="GO" id="GO:0006220">
    <property type="term" value="P:pyrimidine nucleotide metabolic process"/>
    <property type="evidence" value="ECO:0007669"/>
    <property type="project" value="UniProtKB-UniRule"/>
</dbReference>
<dbReference type="CDD" id="cd02020">
    <property type="entry name" value="CMPK"/>
    <property type="match status" value="1"/>
</dbReference>
<dbReference type="Gene3D" id="3.40.50.300">
    <property type="entry name" value="P-loop containing nucleotide triphosphate hydrolases"/>
    <property type="match status" value="1"/>
</dbReference>
<dbReference type="HAMAP" id="MF_00238">
    <property type="entry name" value="Cytidyl_kinase_type1"/>
    <property type="match status" value="1"/>
</dbReference>
<dbReference type="InterPro" id="IPR003136">
    <property type="entry name" value="Cytidylate_kin"/>
</dbReference>
<dbReference type="InterPro" id="IPR011994">
    <property type="entry name" value="Cytidylate_kinase_dom"/>
</dbReference>
<dbReference type="InterPro" id="IPR027417">
    <property type="entry name" value="P-loop_NTPase"/>
</dbReference>
<dbReference type="NCBIfam" id="TIGR00017">
    <property type="entry name" value="cmk"/>
    <property type="match status" value="1"/>
</dbReference>
<dbReference type="Pfam" id="PF02224">
    <property type="entry name" value="Cytidylate_kin"/>
    <property type="match status" value="1"/>
</dbReference>
<dbReference type="SUPFAM" id="SSF52540">
    <property type="entry name" value="P-loop containing nucleoside triphosphate hydrolases"/>
    <property type="match status" value="1"/>
</dbReference>
<accession>B5RQV4</accession>
<evidence type="ECO:0000255" key="1">
    <source>
        <dbReference type="HAMAP-Rule" id="MF_00238"/>
    </source>
</evidence>
<name>KCY_BORRA</name>
<reference key="1">
    <citation type="journal article" date="2008" name="PLoS Genet.">
        <title>The genome of Borrelia recurrentis, the agent of deadly louse-borne relapsing fever, is a degraded subset of tick-borne Borrelia duttonii.</title>
        <authorList>
            <person name="Lescot M."/>
            <person name="Audic S."/>
            <person name="Robert C."/>
            <person name="Nguyen T.T."/>
            <person name="Blanc G."/>
            <person name="Cutler S.J."/>
            <person name="Wincker P."/>
            <person name="Couloux A."/>
            <person name="Claverie J.-M."/>
            <person name="Raoult D."/>
            <person name="Drancourt M."/>
        </authorList>
    </citation>
    <scope>NUCLEOTIDE SEQUENCE [LARGE SCALE GENOMIC DNA]</scope>
    <source>
        <strain>A1</strain>
    </source>
</reference>
<sequence>MIIAIDGPSASGKSSVSKALSMKLGFKFISSGYLYRIITLIAQRFTLNEYDLLNESKLVDLISQNDIKYNDNSFLLNGVDVISHILTEKIDFQVSLYSSYVNIRKIVNKKLREIVKIQDDDYIIEGRDITTVVFPEAKIKIYLDASVEVRTLRRYNQRDDDMALIELEQALEKRDEIDQNKEYGKLKLGKGVFYIDTSYKSLDDVCDIIIKTFNLKKK</sequence>
<organism>
    <name type="scientific">Borrelia recurrentis (strain A1)</name>
    <dbReference type="NCBI Taxonomy" id="412418"/>
    <lineage>
        <taxon>Bacteria</taxon>
        <taxon>Pseudomonadati</taxon>
        <taxon>Spirochaetota</taxon>
        <taxon>Spirochaetia</taxon>
        <taxon>Spirochaetales</taxon>
        <taxon>Borreliaceae</taxon>
        <taxon>Borrelia</taxon>
    </lineage>
</organism>
<feature type="chain" id="PRO_1000100648" description="Cytidylate kinase">
    <location>
        <begin position="1"/>
        <end position="218"/>
    </location>
</feature>
<feature type="binding site" evidence="1">
    <location>
        <begin position="7"/>
        <end position="15"/>
    </location>
    <ligand>
        <name>ATP</name>
        <dbReference type="ChEBI" id="CHEBI:30616"/>
    </ligand>
</feature>
<comment type="catalytic activity">
    <reaction evidence="1">
        <text>CMP + ATP = CDP + ADP</text>
        <dbReference type="Rhea" id="RHEA:11600"/>
        <dbReference type="ChEBI" id="CHEBI:30616"/>
        <dbReference type="ChEBI" id="CHEBI:58069"/>
        <dbReference type="ChEBI" id="CHEBI:60377"/>
        <dbReference type="ChEBI" id="CHEBI:456216"/>
        <dbReference type="EC" id="2.7.4.25"/>
    </reaction>
</comment>
<comment type="catalytic activity">
    <reaction evidence="1">
        <text>dCMP + ATP = dCDP + ADP</text>
        <dbReference type="Rhea" id="RHEA:25094"/>
        <dbReference type="ChEBI" id="CHEBI:30616"/>
        <dbReference type="ChEBI" id="CHEBI:57566"/>
        <dbReference type="ChEBI" id="CHEBI:58593"/>
        <dbReference type="ChEBI" id="CHEBI:456216"/>
        <dbReference type="EC" id="2.7.4.25"/>
    </reaction>
</comment>
<comment type="subcellular location">
    <subcellularLocation>
        <location evidence="1">Cytoplasm</location>
    </subcellularLocation>
</comment>
<comment type="similarity">
    <text evidence="1">Belongs to the cytidylate kinase family. Type 1 subfamily.</text>
</comment>
<keyword id="KW-0067">ATP-binding</keyword>
<keyword id="KW-0963">Cytoplasm</keyword>
<keyword id="KW-0418">Kinase</keyword>
<keyword id="KW-0547">Nucleotide-binding</keyword>
<keyword id="KW-0808">Transferase</keyword>
<protein>
    <recommendedName>
        <fullName evidence="1">Cytidylate kinase</fullName>
        <shortName evidence="1">CK</shortName>
        <ecNumber evidence="1">2.7.4.25</ecNumber>
    </recommendedName>
    <alternativeName>
        <fullName evidence="1">Cytidine monophosphate kinase</fullName>
        <shortName evidence="1">CMP kinase</shortName>
    </alternativeName>
</protein>
<gene>
    <name evidence="1" type="primary">cmk</name>
    <name type="ordered locus">BRE_131</name>
</gene>